<organism>
    <name type="scientific">Ostreid herpesvirus 1 (isolate France)</name>
    <name type="common">OsHV-1</name>
    <name type="synonym">Pacific oyster herpesvirus</name>
    <dbReference type="NCBI Taxonomy" id="654903"/>
    <lineage>
        <taxon>Viruses</taxon>
        <taxon>Duplodnaviria</taxon>
        <taxon>Heunggongvirae</taxon>
        <taxon>Peploviricota</taxon>
        <taxon>Herviviricetes</taxon>
        <taxon>Herpesvirales</taxon>
        <taxon>Malacoherpesviridae</taxon>
        <taxon>Ostreavirus</taxon>
        <taxon>Ostreavirus ostreidmalaco1</taxon>
        <taxon>Ostreid herpesvirus 1</taxon>
    </lineage>
</organism>
<protein>
    <recommendedName>
        <fullName>Putative transmembrane protein ORF25</fullName>
    </recommendedName>
</protein>
<gene>
    <name type="ORF">ORF25</name>
</gene>
<organismHost>
    <name type="scientific">Magallana gigas</name>
    <name type="common">Pacific oyster</name>
    <name type="synonym">Crassostrea gigas</name>
    <dbReference type="NCBI Taxonomy" id="29159"/>
</organismHost>
<organismHost>
    <name type="scientific">Pecten maximus</name>
    <name type="common">King scallop</name>
    <name type="synonym">Pilgrim's clam</name>
    <dbReference type="NCBI Taxonomy" id="6579"/>
</organismHost>
<sequence>MTLAAKLIVLVYVALCFVNESTSQDHSNIYHETLTSLHHKGEFHVKGLFQTPVQYAGDETVLDLYVKKNSGGDVKAVYCLGNKRSIMNQFTDTGTTTDGYDLWRVKIESTPEHISRMISHGPIACNLIWEKVITPAKGNVAEIKGLDLVNFNVNFPRQSTDNVVSRPSTNSQTVDKLLNDTLAKARGVPMSVSVISGICAIILVIFPIFITIANLRRVYLH</sequence>
<comment type="subcellular location">
    <subcellularLocation>
        <location evidence="2">Host membrane</location>
        <topology evidence="2">Single-pass type I membrane protein</topology>
    </subcellularLocation>
</comment>
<feature type="signal peptide" evidence="1">
    <location>
        <begin position="1"/>
        <end position="23"/>
    </location>
</feature>
<feature type="chain" id="PRO_0000385056" description="Putative transmembrane protein ORF25">
    <location>
        <begin position="24"/>
        <end position="221"/>
    </location>
</feature>
<feature type="topological domain" description="Extracellular" evidence="1">
    <location>
        <begin position="24"/>
        <end position="191"/>
    </location>
</feature>
<feature type="transmembrane region" description="Helical" evidence="1">
    <location>
        <begin position="192"/>
        <end position="212"/>
    </location>
</feature>
<feature type="topological domain" description="Cytoplasmic" evidence="1">
    <location>
        <begin position="213"/>
        <end position="221"/>
    </location>
</feature>
<feature type="glycosylation site" description="N-linked (GlcNAc...) asparagine; by host" evidence="1">
    <location>
        <position position="19"/>
    </location>
</feature>
<feature type="glycosylation site" description="N-linked (GlcNAc...) asparagine; by host" evidence="1">
    <location>
        <position position="179"/>
    </location>
</feature>
<name>Y025_OSHVF</name>
<reference key="1">
    <citation type="journal article" date="2005" name="J. Gen. Virol.">
        <title>A novel class of herpesvirus with bivalve hosts.</title>
        <authorList>
            <person name="Davison A.J."/>
            <person name="Trus B.L."/>
            <person name="Cheng N."/>
            <person name="Steven A.C."/>
            <person name="Watson M.S."/>
            <person name="Cunningham C."/>
            <person name="Le Deuff R.M."/>
            <person name="Renault T."/>
        </authorList>
    </citation>
    <scope>NUCLEOTIDE SEQUENCE [LARGE SCALE GENOMIC DNA]</scope>
</reference>
<evidence type="ECO:0000255" key="1"/>
<evidence type="ECO:0000305" key="2"/>
<proteinExistence type="inferred from homology"/>
<accession>Q6R7J8</accession>
<dbReference type="EMBL" id="AY509253">
    <property type="protein sequence ID" value="AAS00917.1"/>
    <property type="molecule type" value="Genomic_DNA"/>
</dbReference>
<dbReference type="RefSeq" id="YP_024570.1">
    <property type="nucleotide sequence ID" value="NC_005881.2"/>
</dbReference>
<dbReference type="KEGG" id="vg:2948236"/>
<dbReference type="Proteomes" id="UP000007021">
    <property type="component" value="Segment"/>
</dbReference>
<dbReference type="GO" id="GO:0033644">
    <property type="term" value="C:host cell membrane"/>
    <property type="evidence" value="ECO:0007669"/>
    <property type="project" value="UniProtKB-SubCell"/>
</dbReference>
<dbReference type="GO" id="GO:0016020">
    <property type="term" value="C:membrane"/>
    <property type="evidence" value="ECO:0007669"/>
    <property type="project" value="UniProtKB-KW"/>
</dbReference>
<keyword id="KW-0325">Glycoprotein</keyword>
<keyword id="KW-1043">Host membrane</keyword>
<keyword id="KW-0472">Membrane</keyword>
<keyword id="KW-1185">Reference proteome</keyword>
<keyword id="KW-0732">Signal</keyword>
<keyword id="KW-0812">Transmembrane</keyword>
<keyword id="KW-1133">Transmembrane helix</keyword>